<protein>
    <recommendedName>
        <fullName evidence="1">DNA repair protein RecO</fullName>
    </recommendedName>
    <alternativeName>
        <fullName evidence="1">Recombination protein O</fullName>
    </alternativeName>
</protein>
<reference key="1">
    <citation type="journal article" date="2012" name="BMC Microbiol.">
        <title>Genome sequence of Desulfitobacterium hafniense DCB-2, a Gram-positive anaerobe capable of dehalogenation and metal reduction.</title>
        <authorList>
            <person name="Kim S.H."/>
            <person name="Harzman C."/>
            <person name="Davis J.K."/>
            <person name="Hutcheson R."/>
            <person name="Broderick J.B."/>
            <person name="Marsh T.L."/>
            <person name="Tiedje J.M."/>
        </authorList>
    </citation>
    <scope>NUCLEOTIDE SEQUENCE [LARGE SCALE GENOMIC DNA]</scope>
    <source>
        <strain>DSM 10664 / DCB-2</strain>
    </source>
</reference>
<dbReference type="EMBL" id="CP001336">
    <property type="protein sequence ID" value="ACL22278.1"/>
    <property type="molecule type" value="Genomic_DNA"/>
</dbReference>
<dbReference type="RefSeq" id="WP_005816431.1">
    <property type="nucleotide sequence ID" value="NC_011830.1"/>
</dbReference>
<dbReference type="SMR" id="B8FUK8"/>
<dbReference type="KEGG" id="dhd:Dhaf_4273"/>
<dbReference type="HOGENOM" id="CLU_066632_3_0_9"/>
<dbReference type="Proteomes" id="UP000007726">
    <property type="component" value="Chromosome"/>
</dbReference>
<dbReference type="GO" id="GO:0043590">
    <property type="term" value="C:bacterial nucleoid"/>
    <property type="evidence" value="ECO:0007669"/>
    <property type="project" value="TreeGrafter"/>
</dbReference>
<dbReference type="GO" id="GO:0006310">
    <property type="term" value="P:DNA recombination"/>
    <property type="evidence" value="ECO:0007669"/>
    <property type="project" value="UniProtKB-UniRule"/>
</dbReference>
<dbReference type="GO" id="GO:0006302">
    <property type="term" value="P:double-strand break repair"/>
    <property type="evidence" value="ECO:0007669"/>
    <property type="project" value="TreeGrafter"/>
</dbReference>
<dbReference type="Gene3D" id="2.40.50.140">
    <property type="entry name" value="Nucleic acid-binding proteins"/>
    <property type="match status" value="1"/>
</dbReference>
<dbReference type="Gene3D" id="1.20.1440.120">
    <property type="entry name" value="Recombination protein O, C-terminal domain"/>
    <property type="match status" value="1"/>
</dbReference>
<dbReference type="HAMAP" id="MF_00201">
    <property type="entry name" value="RecO"/>
    <property type="match status" value="1"/>
</dbReference>
<dbReference type="InterPro" id="IPR037278">
    <property type="entry name" value="ARFGAP/RecO"/>
</dbReference>
<dbReference type="InterPro" id="IPR022572">
    <property type="entry name" value="DNA_rep/recomb_RecO_N"/>
</dbReference>
<dbReference type="InterPro" id="IPR012340">
    <property type="entry name" value="NA-bd_OB-fold"/>
</dbReference>
<dbReference type="InterPro" id="IPR003717">
    <property type="entry name" value="RecO"/>
</dbReference>
<dbReference type="InterPro" id="IPR042242">
    <property type="entry name" value="RecO_C"/>
</dbReference>
<dbReference type="NCBIfam" id="TIGR00613">
    <property type="entry name" value="reco"/>
    <property type="match status" value="1"/>
</dbReference>
<dbReference type="PANTHER" id="PTHR33991">
    <property type="entry name" value="DNA REPAIR PROTEIN RECO"/>
    <property type="match status" value="1"/>
</dbReference>
<dbReference type="PANTHER" id="PTHR33991:SF1">
    <property type="entry name" value="DNA REPAIR PROTEIN RECO"/>
    <property type="match status" value="1"/>
</dbReference>
<dbReference type="Pfam" id="PF02565">
    <property type="entry name" value="RecO_C"/>
    <property type="match status" value="1"/>
</dbReference>
<dbReference type="Pfam" id="PF11967">
    <property type="entry name" value="RecO_N"/>
    <property type="match status" value="1"/>
</dbReference>
<dbReference type="SUPFAM" id="SSF57863">
    <property type="entry name" value="ArfGap/RecO-like zinc finger"/>
    <property type="match status" value="1"/>
</dbReference>
<dbReference type="SUPFAM" id="SSF50249">
    <property type="entry name" value="Nucleic acid-binding proteins"/>
    <property type="match status" value="1"/>
</dbReference>
<gene>
    <name evidence="1" type="primary">recO</name>
    <name type="ordered locus">Dhaf_4273</name>
</gene>
<accession>B8FUK8</accession>
<name>RECO_DESHD</name>
<evidence type="ECO:0000255" key="1">
    <source>
        <dbReference type="HAMAP-Rule" id="MF_00201"/>
    </source>
</evidence>
<evidence type="ECO:0000256" key="2">
    <source>
        <dbReference type="SAM" id="MobiDB-lite"/>
    </source>
</evidence>
<feature type="chain" id="PRO_1000193370" description="DNA repair protein RecO">
    <location>
        <begin position="1"/>
        <end position="273"/>
    </location>
</feature>
<feature type="region of interest" description="Disordered" evidence="2">
    <location>
        <begin position="250"/>
        <end position="273"/>
    </location>
</feature>
<feature type="compositionally biased region" description="Basic and acidic residues" evidence="2">
    <location>
        <begin position="257"/>
        <end position="273"/>
    </location>
</feature>
<proteinExistence type="inferred from homology"/>
<organism>
    <name type="scientific">Desulfitobacterium hafniense (strain DSM 10664 / DCB-2)</name>
    <dbReference type="NCBI Taxonomy" id="272564"/>
    <lineage>
        <taxon>Bacteria</taxon>
        <taxon>Bacillati</taxon>
        <taxon>Bacillota</taxon>
        <taxon>Clostridia</taxon>
        <taxon>Eubacteriales</taxon>
        <taxon>Desulfitobacteriaceae</taxon>
        <taxon>Desulfitobacterium</taxon>
    </lineage>
</organism>
<sequence>MGVYHADALVIRSREYGESDRLLTLFSREYGKIQAVAKGVRKPKSRQRAGAQLFTYAEYLLHKGKSLDTVNQVSPRESFPHLWTDLDMSMAATAMAELLDLATLPGQPHPELFTLTFSSLFLVESCDPALVQCTYALKLMNYLGYRPRLVECAECGQRVQGERLLFSPDAGGVVCRQCQTQGSSPAVGRWVSGGSLGLMRQLLQGELEKLNRLRWNQWSKKEILEVSQYFCEQTLDKSLRSWSMGNRLVNVGQNPSGKDDLNERRDVDGTGES</sequence>
<keyword id="KW-0227">DNA damage</keyword>
<keyword id="KW-0233">DNA recombination</keyword>
<keyword id="KW-0234">DNA repair</keyword>
<comment type="function">
    <text evidence="1">Involved in DNA repair and RecF pathway recombination.</text>
</comment>
<comment type="similarity">
    <text evidence="1">Belongs to the RecO family.</text>
</comment>